<proteinExistence type="inferred from homology"/>
<sequence>MQGSVTEFLKPRLVDIEQISSTHAKVTLEPLERGFGHTLGNALRRILLSSMPGCAVIEVEIEGVLHEYSTKEGVQEDILEILLNLKGLAVRVAEGKDEVFITLNKSGSGPVVAGDITHDGDVEIANPEHVICHLTDDNAEIAMRIKVERGRGYVPASARIHNEEDERPIGRLLVDATYSPVDKIAYAVEAARVEQRTDLDKLVIDMETNGTLEPEEAIRRAATILAEQLDAFVDLRDVRVPEEKEEKPEFDPILLRPVDDLELTVRSANCLKAEAIHYIGDLVQRTEVELLKTPNLGKKSLTEIKDVLASRGLSLGMRLENWPPASIAED</sequence>
<dbReference type="EC" id="2.7.7.6" evidence="1"/>
<dbReference type="EMBL" id="CP000789">
    <property type="protein sequence ID" value="ABU69755.1"/>
    <property type="molecule type" value="Genomic_DNA"/>
</dbReference>
<dbReference type="RefSeq" id="WP_012126879.1">
    <property type="nucleotide sequence ID" value="NC_009783.1"/>
</dbReference>
<dbReference type="SMR" id="A7N0H8"/>
<dbReference type="KEGG" id="vha:VIBHAR_00754"/>
<dbReference type="PATRIC" id="fig|338187.25.peg.1860"/>
<dbReference type="Proteomes" id="UP000008152">
    <property type="component" value="Chromosome I"/>
</dbReference>
<dbReference type="GO" id="GO:0005737">
    <property type="term" value="C:cytoplasm"/>
    <property type="evidence" value="ECO:0007669"/>
    <property type="project" value="UniProtKB-ARBA"/>
</dbReference>
<dbReference type="GO" id="GO:0000428">
    <property type="term" value="C:DNA-directed RNA polymerase complex"/>
    <property type="evidence" value="ECO:0007669"/>
    <property type="project" value="UniProtKB-KW"/>
</dbReference>
<dbReference type="GO" id="GO:0003677">
    <property type="term" value="F:DNA binding"/>
    <property type="evidence" value="ECO:0007669"/>
    <property type="project" value="UniProtKB-UniRule"/>
</dbReference>
<dbReference type="GO" id="GO:0003899">
    <property type="term" value="F:DNA-directed RNA polymerase activity"/>
    <property type="evidence" value="ECO:0007669"/>
    <property type="project" value="UniProtKB-UniRule"/>
</dbReference>
<dbReference type="GO" id="GO:0046983">
    <property type="term" value="F:protein dimerization activity"/>
    <property type="evidence" value="ECO:0007669"/>
    <property type="project" value="InterPro"/>
</dbReference>
<dbReference type="GO" id="GO:0006351">
    <property type="term" value="P:DNA-templated transcription"/>
    <property type="evidence" value="ECO:0007669"/>
    <property type="project" value="UniProtKB-UniRule"/>
</dbReference>
<dbReference type="CDD" id="cd06928">
    <property type="entry name" value="RNAP_alpha_NTD"/>
    <property type="match status" value="1"/>
</dbReference>
<dbReference type="FunFam" id="1.10.150.20:FF:000001">
    <property type="entry name" value="DNA-directed RNA polymerase subunit alpha"/>
    <property type="match status" value="1"/>
</dbReference>
<dbReference type="FunFam" id="2.170.120.12:FF:000001">
    <property type="entry name" value="DNA-directed RNA polymerase subunit alpha"/>
    <property type="match status" value="1"/>
</dbReference>
<dbReference type="Gene3D" id="1.10.150.20">
    <property type="entry name" value="5' to 3' exonuclease, C-terminal subdomain"/>
    <property type="match status" value="1"/>
</dbReference>
<dbReference type="Gene3D" id="2.170.120.12">
    <property type="entry name" value="DNA-directed RNA polymerase, insert domain"/>
    <property type="match status" value="1"/>
</dbReference>
<dbReference type="Gene3D" id="3.30.1360.10">
    <property type="entry name" value="RNA polymerase, RBP11-like subunit"/>
    <property type="match status" value="1"/>
</dbReference>
<dbReference type="HAMAP" id="MF_00059">
    <property type="entry name" value="RNApol_bact_RpoA"/>
    <property type="match status" value="1"/>
</dbReference>
<dbReference type="InterPro" id="IPR011262">
    <property type="entry name" value="DNA-dir_RNA_pol_insert"/>
</dbReference>
<dbReference type="InterPro" id="IPR011263">
    <property type="entry name" value="DNA-dir_RNA_pol_RpoA/D/Rpb3"/>
</dbReference>
<dbReference type="InterPro" id="IPR011773">
    <property type="entry name" value="DNA-dir_RpoA"/>
</dbReference>
<dbReference type="InterPro" id="IPR036603">
    <property type="entry name" value="RBP11-like"/>
</dbReference>
<dbReference type="InterPro" id="IPR011260">
    <property type="entry name" value="RNAP_asu_C"/>
</dbReference>
<dbReference type="InterPro" id="IPR036643">
    <property type="entry name" value="RNApol_insert_sf"/>
</dbReference>
<dbReference type="NCBIfam" id="NF003513">
    <property type="entry name" value="PRK05182.1-2"/>
    <property type="match status" value="1"/>
</dbReference>
<dbReference type="NCBIfam" id="NF003519">
    <property type="entry name" value="PRK05182.2-5"/>
    <property type="match status" value="1"/>
</dbReference>
<dbReference type="NCBIfam" id="TIGR02027">
    <property type="entry name" value="rpoA"/>
    <property type="match status" value="1"/>
</dbReference>
<dbReference type="Pfam" id="PF01000">
    <property type="entry name" value="RNA_pol_A_bac"/>
    <property type="match status" value="1"/>
</dbReference>
<dbReference type="Pfam" id="PF03118">
    <property type="entry name" value="RNA_pol_A_CTD"/>
    <property type="match status" value="1"/>
</dbReference>
<dbReference type="Pfam" id="PF01193">
    <property type="entry name" value="RNA_pol_L"/>
    <property type="match status" value="1"/>
</dbReference>
<dbReference type="SMART" id="SM00662">
    <property type="entry name" value="RPOLD"/>
    <property type="match status" value="1"/>
</dbReference>
<dbReference type="SUPFAM" id="SSF47789">
    <property type="entry name" value="C-terminal domain of RNA polymerase alpha subunit"/>
    <property type="match status" value="1"/>
</dbReference>
<dbReference type="SUPFAM" id="SSF56553">
    <property type="entry name" value="Insert subdomain of RNA polymerase alpha subunit"/>
    <property type="match status" value="1"/>
</dbReference>
<dbReference type="SUPFAM" id="SSF55257">
    <property type="entry name" value="RBP11-like subunits of RNA polymerase"/>
    <property type="match status" value="1"/>
</dbReference>
<organism>
    <name type="scientific">Vibrio campbellii (strain ATCC BAA-1116)</name>
    <dbReference type="NCBI Taxonomy" id="2902295"/>
    <lineage>
        <taxon>Bacteria</taxon>
        <taxon>Pseudomonadati</taxon>
        <taxon>Pseudomonadota</taxon>
        <taxon>Gammaproteobacteria</taxon>
        <taxon>Vibrionales</taxon>
        <taxon>Vibrionaceae</taxon>
        <taxon>Vibrio</taxon>
    </lineage>
</organism>
<accession>A7N0H8</accession>
<reference key="1">
    <citation type="submission" date="2007-08" db="EMBL/GenBank/DDBJ databases">
        <authorList>
            <consortium name="The Vibrio harveyi Genome Sequencing Project"/>
            <person name="Bassler B."/>
            <person name="Clifton S.W."/>
            <person name="Fulton L."/>
            <person name="Delehaunty K."/>
            <person name="Fronick C."/>
            <person name="Harrison M."/>
            <person name="Markivic C."/>
            <person name="Fulton R."/>
            <person name="Tin-Wollam A.-M."/>
            <person name="Shah N."/>
            <person name="Pepin K."/>
            <person name="Nash W."/>
            <person name="Thiruvilangam P."/>
            <person name="Bhonagiri V."/>
            <person name="Waters C."/>
            <person name="Tu K.C."/>
            <person name="Irgon J."/>
            <person name="Wilson R.K."/>
        </authorList>
    </citation>
    <scope>NUCLEOTIDE SEQUENCE [LARGE SCALE GENOMIC DNA]</scope>
    <source>
        <strain>ATCC BAA-1116 / BB120</strain>
    </source>
</reference>
<keyword id="KW-0240">DNA-directed RNA polymerase</keyword>
<keyword id="KW-0548">Nucleotidyltransferase</keyword>
<keyword id="KW-0804">Transcription</keyword>
<keyword id="KW-0808">Transferase</keyword>
<gene>
    <name evidence="1" type="primary">rpoA</name>
    <name type="ordered locus">VIBHAR_00754</name>
</gene>
<evidence type="ECO:0000255" key="1">
    <source>
        <dbReference type="HAMAP-Rule" id="MF_00059"/>
    </source>
</evidence>
<feature type="chain" id="PRO_1000007697" description="DNA-directed RNA polymerase subunit alpha">
    <location>
        <begin position="1"/>
        <end position="330"/>
    </location>
</feature>
<feature type="region of interest" description="Alpha N-terminal domain (alpha-NTD)" evidence="1">
    <location>
        <begin position="1"/>
        <end position="236"/>
    </location>
</feature>
<feature type="region of interest" description="Alpha C-terminal domain (alpha-CTD)" evidence="1">
    <location>
        <begin position="250"/>
        <end position="330"/>
    </location>
</feature>
<name>RPOA_VIBC1</name>
<comment type="function">
    <text evidence="1">DNA-dependent RNA polymerase catalyzes the transcription of DNA into RNA using the four ribonucleoside triphosphates as substrates.</text>
</comment>
<comment type="catalytic activity">
    <reaction evidence="1">
        <text>RNA(n) + a ribonucleoside 5'-triphosphate = RNA(n+1) + diphosphate</text>
        <dbReference type="Rhea" id="RHEA:21248"/>
        <dbReference type="Rhea" id="RHEA-COMP:14527"/>
        <dbReference type="Rhea" id="RHEA-COMP:17342"/>
        <dbReference type="ChEBI" id="CHEBI:33019"/>
        <dbReference type="ChEBI" id="CHEBI:61557"/>
        <dbReference type="ChEBI" id="CHEBI:140395"/>
        <dbReference type="EC" id="2.7.7.6"/>
    </reaction>
</comment>
<comment type="subunit">
    <text evidence="1">Homodimer. The RNAP catalytic core consists of 2 alpha, 1 beta, 1 beta' and 1 omega subunit. When a sigma factor is associated with the core the holoenzyme is formed, which can initiate transcription.</text>
</comment>
<comment type="domain">
    <text evidence="1">The N-terminal domain is essential for RNAP assembly and basal transcription, whereas the C-terminal domain is involved in interaction with transcriptional regulators and with upstream promoter elements.</text>
</comment>
<comment type="similarity">
    <text evidence="1">Belongs to the RNA polymerase alpha chain family.</text>
</comment>
<protein>
    <recommendedName>
        <fullName evidence="1">DNA-directed RNA polymerase subunit alpha</fullName>
        <shortName evidence="1">RNAP subunit alpha</shortName>
        <ecNumber evidence="1">2.7.7.6</ecNumber>
    </recommendedName>
    <alternativeName>
        <fullName evidence="1">RNA polymerase subunit alpha</fullName>
    </alternativeName>
    <alternativeName>
        <fullName evidence="1">Transcriptase subunit alpha</fullName>
    </alternativeName>
</protein>